<proteinExistence type="inferred from homology"/>
<dbReference type="EC" id="4.1.1.48" evidence="1"/>
<dbReference type="EMBL" id="CP000255">
    <property type="protein sequence ID" value="ABD22677.1"/>
    <property type="molecule type" value="Genomic_DNA"/>
</dbReference>
<dbReference type="RefSeq" id="WP_000154116.1">
    <property type="nucleotide sequence ID" value="NZ_CP027476.1"/>
</dbReference>
<dbReference type="SMR" id="Q2FH66"/>
<dbReference type="KEGG" id="saa:SAUSA300_1265"/>
<dbReference type="HOGENOM" id="CLU_034247_2_1_9"/>
<dbReference type="OMA" id="RGPHDLI"/>
<dbReference type="UniPathway" id="UPA00035">
    <property type="reaction ID" value="UER00043"/>
</dbReference>
<dbReference type="Proteomes" id="UP000001939">
    <property type="component" value="Chromosome"/>
</dbReference>
<dbReference type="GO" id="GO:0004425">
    <property type="term" value="F:indole-3-glycerol-phosphate synthase activity"/>
    <property type="evidence" value="ECO:0007669"/>
    <property type="project" value="UniProtKB-UniRule"/>
</dbReference>
<dbReference type="GO" id="GO:0004640">
    <property type="term" value="F:phosphoribosylanthranilate isomerase activity"/>
    <property type="evidence" value="ECO:0007669"/>
    <property type="project" value="TreeGrafter"/>
</dbReference>
<dbReference type="GO" id="GO:0000162">
    <property type="term" value="P:L-tryptophan biosynthetic process"/>
    <property type="evidence" value="ECO:0007669"/>
    <property type="project" value="UniProtKB-UniRule"/>
</dbReference>
<dbReference type="CDD" id="cd00331">
    <property type="entry name" value="IGPS"/>
    <property type="match status" value="1"/>
</dbReference>
<dbReference type="FunFam" id="3.20.20.70:FF:000212">
    <property type="entry name" value="Indole-3-glycerol phosphate synthase"/>
    <property type="match status" value="1"/>
</dbReference>
<dbReference type="Gene3D" id="3.20.20.70">
    <property type="entry name" value="Aldolase class I"/>
    <property type="match status" value="1"/>
</dbReference>
<dbReference type="HAMAP" id="MF_00134_B">
    <property type="entry name" value="IGPS_B"/>
    <property type="match status" value="1"/>
</dbReference>
<dbReference type="InterPro" id="IPR013785">
    <property type="entry name" value="Aldolase_TIM"/>
</dbReference>
<dbReference type="InterPro" id="IPR045186">
    <property type="entry name" value="Indole-3-glycerol_P_synth"/>
</dbReference>
<dbReference type="InterPro" id="IPR013798">
    <property type="entry name" value="Indole-3-glycerol_P_synth_dom"/>
</dbReference>
<dbReference type="InterPro" id="IPR001468">
    <property type="entry name" value="Indole-3-GlycerolPSynthase_CS"/>
</dbReference>
<dbReference type="InterPro" id="IPR011060">
    <property type="entry name" value="RibuloseP-bd_barrel"/>
</dbReference>
<dbReference type="NCBIfam" id="NF001371">
    <property type="entry name" value="PRK00278.1-3"/>
    <property type="match status" value="1"/>
</dbReference>
<dbReference type="PANTHER" id="PTHR22854:SF2">
    <property type="entry name" value="INDOLE-3-GLYCEROL-PHOSPHATE SYNTHASE"/>
    <property type="match status" value="1"/>
</dbReference>
<dbReference type="PANTHER" id="PTHR22854">
    <property type="entry name" value="TRYPTOPHAN BIOSYNTHESIS PROTEIN"/>
    <property type="match status" value="1"/>
</dbReference>
<dbReference type="Pfam" id="PF00218">
    <property type="entry name" value="IGPS"/>
    <property type="match status" value="1"/>
</dbReference>
<dbReference type="SUPFAM" id="SSF51366">
    <property type="entry name" value="Ribulose-phoshate binding barrel"/>
    <property type="match status" value="1"/>
</dbReference>
<dbReference type="PROSITE" id="PS00614">
    <property type="entry name" value="IGPS"/>
    <property type="match status" value="1"/>
</dbReference>
<comment type="catalytic activity">
    <reaction evidence="1">
        <text>1-(2-carboxyphenylamino)-1-deoxy-D-ribulose 5-phosphate + H(+) = (1S,2R)-1-C-(indol-3-yl)glycerol 3-phosphate + CO2 + H2O</text>
        <dbReference type="Rhea" id="RHEA:23476"/>
        <dbReference type="ChEBI" id="CHEBI:15377"/>
        <dbReference type="ChEBI" id="CHEBI:15378"/>
        <dbReference type="ChEBI" id="CHEBI:16526"/>
        <dbReference type="ChEBI" id="CHEBI:58613"/>
        <dbReference type="ChEBI" id="CHEBI:58866"/>
        <dbReference type="EC" id="4.1.1.48"/>
    </reaction>
</comment>
<comment type="pathway">
    <text evidence="1">Amino-acid biosynthesis; L-tryptophan biosynthesis; L-tryptophan from chorismate: step 4/5.</text>
</comment>
<comment type="similarity">
    <text evidence="1">Belongs to the TrpC family.</text>
</comment>
<evidence type="ECO:0000255" key="1">
    <source>
        <dbReference type="HAMAP-Rule" id="MF_00134"/>
    </source>
</evidence>
<sequence>MTILSEIVKYKQSLLQNGYYQDKLNTLKSVKIQNKKSFINAIEKEPKLAIIAEIKSKSPTVNDLPERDLSQQISDYDQYGANAVSILTDEKYFGGSFERLQALTTKTTLPVLCKDFIIDPLQIDVAKQAGASMILLIVNILSDKQLKDLYNYAISQNLEVLVEVHDRHELERAYKVNAKLIGVNNRDLKRFVTNVEHTNTILENKKTNHYYISESGIHDASDVRKILHSGIDGLLIGEALMRCDNLSEFLPQLKMQKVKS</sequence>
<accession>Q2FH66</accession>
<protein>
    <recommendedName>
        <fullName evidence="1">Indole-3-glycerol phosphate synthase</fullName>
        <shortName evidence="1">IGPS</shortName>
        <ecNumber evidence="1">4.1.1.48</ecNumber>
    </recommendedName>
</protein>
<feature type="chain" id="PRO_1000095888" description="Indole-3-glycerol phosphate synthase">
    <location>
        <begin position="1"/>
        <end position="260"/>
    </location>
</feature>
<reference key="1">
    <citation type="journal article" date="2006" name="Lancet">
        <title>Complete genome sequence of USA300, an epidemic clone of community-acquired meticillin-resistant Staphylococcus aureus.</title>
        <authorList>
            <person name="Diep B.A."/>
            <person name="Gill S.R."/>
            <person name="Chang R.F."/>
            <person name="Phan T.H."/>
            <person name="Chen J.H."/>
            <person name="Davidson M.G."/>
            <person name="Lin F."/>
            <person name="Lin J."/>
            <person name="Carleton H.A."/>
            <person name="Mongodin E.F."/>
            <person name="Sensabaugh G.F."/>
            <person name="Perdreau-Remington F."/>
        </authorList>
    </citation>
    <scope>NUCLEOTIDE SEQUENCE [LARGE SCALE GENOMIC DNA]</scope>
    <source>
        <strain>USA300</strain>
    </source>
</reference>
<name>TRPC_STAA3</name>
<organism>
    <name type="scientific">Staphylococcus aureus (strain USA300)</name>
    <dbReference type="NCBI Taxonomy" id="367830"/>
    <lineage>
        <taxon>Bacteria</taxon>
        <taxon>Bacillati</taxon>
        <taxon>Bacillota</taxon>
        <taxon>Bacilli</taxon>
        <taxon>Bacillales</taxon>
        <taxon>Staphylococcaceae</taxon>
        <taxon>Staphylococcus</taxon>
    </lineage>
</organism>
<keyword id="KW-0028">Amino-acid biosynthesis</keyword>
<keyword id="KW-0057">Aromatic amino acid biosynthesis</keyword>
<keyword id="KW-0210">Decarboxylase</keyword>
<keyword id="KW-0456">Lyase</keyword>
<keyword id="KW-0822">Tryptophan biosynthesis</keyword>
<gene>
    <name evidence="1" type="primary">trpC</name>
    <name type="ordered locus">SAUSA300_1265</name>
</gene>